<accession>Q6FY24</accession>
<comment type="function">
    <text evidence="1">Component of the biogenesis of lysosome-related organelles complex-1 (BLOC-1), a complex that is involved in endosomal cargo sorting.</text>
</comment>
<comment type="subunit">
    <text evidence="1">Component of the biogenesis of lysosome-related organelles complex-1 (BLOC-1).</text>
</comment>
<comment type="subcellular location">
    <subcellularLocation>
        <location evidence="1">Cytoplasm</location>
    </subcellularLocation>
    <text evidence="1">Punctate pattern.</text>
</comment>
<comment type="similarity">
    <text evidence="3">Belongs to the BLOC1S4 family.</text>
</comment>
<organism>
    <name type="scientific">Candida glabrata (strain ATCC 2001 / BCRC 20586 / JCM 3761 / NBRC 0622 / NRRL Y-65 / CBS 138)</name>
    <name type="common">Yeast</name>
    <name type="synonym">Nakaseomyces glabratus</name>
    <dbReference type="NCBI Taxonomy" id="284593"/>
    <lineage>
        <taxon>Eukaryota</taxon>
        <taxon>Fungi</taxon>
        <taxon>Dikarya</taxon>
        <taxon>Ascomycota</taxon>
        <taxon>Saccharomycotina</taxon>
        <taxon>Saccharomycetes</taxon>
        <taxon>Saccharomycetales</taxon>
        <taxon>Saccharomycetaceae</taxon>
        <taxon>Nakaseomyces</taxon>
    </lineage>
</organism>
<keyword id="KW-0175">Coiled coil</keyword>
<keyword id="KW-0963">Cytoplasm</keyword>
<keyword id="KW-1185">Reference proteome</keyword>
<keyword id="KW-0813">Transport</keyword>
<evidence type="ECO:0000250" key="1"/>
<evidence type="ECO:0000255" key="2"/>
<evidence type="ECO:0000305" key="3"/>
<protein>
    <recommendedName>
        <fullName>Biogenesis of lysosome-related organelles complex 1 subunit CNL1</fullName>
        <shortName>BLOC-1 subunit CNL1</shortName>
    </recommendedName>
    <alternativeName>
        <fullName>CNO-like protein 1</fullName>
    </alternativeName>
</protein>
<name>BL1S4_CANGA</name>
<reference key="1">
    <citation type="journal article" date="2004" name="Nature">
        <title>Genome evolution in yeasts.</title>
        <authorList>
            <person name="Dujon B."/>
            <person name="Sherman D."/>
            <person name="Fischer G."/>
            <person name="Durrens P."/>
            <person name="Casaregola S."/>
            <person name="Lafontaine I."/>
            <person name="de Montigny J."/>
            <person name="Marck C."/>
            <person name="Neuveglise C."/>
            <person name="Talla E."/>
            <person name="Goffard N."/>
            <person name="Frangeul L."/>
            <person name="Aigle M."/>
            <person name="Anthouard V."/>
            <person name="Babour A."/>
            <person name="Barbe V."/>
            <person name="Barnay S."/>
            <person name="Blanchin S."/>
            <person name="Beckerich J.-M."/>
            <person name="Beyne E."/>
            <person name="Bleykasten C."/>
            <person name="Boisrame A."/>
            <person name="Boyer J."/>
            <person name="Cattolico L."/>
            <person name="Confanioleri F."/>
            <person name="de Daruvar A."/>
            <person name="Despons L."/>
            <person name="Fabre E."/>
            <person name="Fairhead C."/>
            <person name="Ferry-Dumazet H."/>
            <person name="Groppi A."/>
            <person name="Hantraye F."/>
            <person name="Hennequin C."/>
            <person name="Jauniaux N."/>
            <person name="Joyet P."/>
            <person name="Kachouri R."/>
            <person name="Kerrest A."/>
            <person name="Koszul R."/>
            <person name="Lemaire M."/>
            <person name="Lesur I."/>
            <person name="Ma L."/>
            <person name="Muller H."/>
            <person name="Nicaud J.-M."/>
            <person name="Nikolski M."/>
            <person name="Oztas S."/>
            <person name="Ozier-Kalogeropoulos O."/>
            <person name="Pellenz S."/>
            <person name="Potier S."/>
            <person name="Richard G.-F."/>
            <person name="Straub M.-L."/>
            <person name="Suleau A."/>
            <person name="Swennen D."/>
            <person name="Tekaia F."/>
            <person name="Wesolowski-Louvel M."/>
            <person name="Westhof E."/>
            <person name="Wirth B."/>
            <person name="Zeniou-Meyer M."/>
            <person name="Zivanovic Y."/>
            <person name="Bolotin-Fukuhara M."/>
            <person name="Thierry A."/>
            <person name="Bouchier C."/>
            <person name="Caudron B."/>
            <person name="Scarpelli C."/>
            <person name="Gaillardin C."/>
            <person name="Weissenbach J."/>
            <person name="Wincker P."/>
            <person name="Souciet J.-L."/>
        </authorList>
    </citation>
    <scope>NUCLEOTIDE SEQUENCE [LARGE SCALE GENOMIC DNA]</scope>
    <source>
        <strain>ATCC 2001 / BCRC 20586 / JCM 3761 / NBRC 0622 / NRRL Y-65 / CBS 138</strain>
    </source>
</reference>
<proteinExistence type="inferred from homology"/>
<dbReference type="EMBL" id="CR380947">
    <property type="protein sequence ID" value="CAG57771.1"/>
    <property type="molecule type" value="Genomic_DNA"/>
</dbReference>
<dbReference type="RefSeq" id="XP_444878.1">
    <property type="nucleotide sequence ID" value="XM_444878.1"/>
</dbReference>
<dbReference type="SMR" id="Q6FY24"/>
<dbReference type="FunCoup" id="Q6FY24">
    <property type="interactions" value="36"/>
</dbReference>
<dbReference type="STRING" id="284593.Q6FY24"/>
<dbReference type="EnsemblFungi" id="CAGL0A02618g-T">
    <property type="protein sequence ID" value="CAGL0A02618g-T-p1"/>
    <property type="gene ID" value="CAGL0A02618g"/>
</dbReference>
<dbReference type="KEGG" id="cgr:2886310"/>
<dbReference type="CGD" id="CAL0126891">
    <property type="gene designation" value="CAGL0A02618g"/>
</dbReference>
<dbReference type="VEuPathDB" id="FungiDB:B1J91_A02618g"/>
<dbReference type="VEuPathDB" id="FungiDB:CAGL0A02618g"/>
<dbReference type="eggNOG" id="ENOG502S4DQ">
    <property type="taxonomic scope" value="Eukaryota"/>
</dbReference>
<dbReference type="HOGENOM" id="CLU_141728_1_0_1"/>
<dbReference type="InParanoid" id="Q6FY24"/>
<dbReference type="OMA" id="HFDMLDQ"/>
<dbReference type="Proteomes" id="UP000002428">
    <property type="component" value="Chromosome A"/>
</dbReference>
<dbReference type="GO" id="GO:0031083">
    <property type="term" value="C:BLOC-1 complex"/>
    <property type="evidence" value="ECO:0007669"/>
    <property type="project" value="EnsemblFungi"/>
</dbReference>
<dbReference type="GO" id="GO:0005768">
    <property type="term" value="C:endosome"/>
    <property type="evidence" value="ECO:0007669"/>
    <property type="project" value="EnsemblFungi"/>
</dbReference>
<dbReference type="GO" id="GO:0007032">
    <property type="term" value="P:endosome organization"/>
    <property type="evidence" value="ECO:0007669"/>
    <property type="project" value="EnsemblFungi"/>
</dbReference>
<dbReference type="GO" id="GO:0032880">
    <property type="term" value="P:regulation of protein localization"/>
    <property type="evidence" value="ECO:0007669"/>
    <property type="project" value="EnsemblFungi"/>
</dbReference>
<dbReference type="CDD" id="cd24144">
    <property type="entry name" value="BLOC1_CNL1"/>
    <property type="match status" value="1"/>
</dbReference>
<dbReference type="InterPro" id="IPR034455">
    <property type="entry name" value="CNL1"/>
</dbReference>
<dbReference type="PANTHER" id="PTHR39145">
    <property type="entry name" value="BIOGENESIS OF LYSOSOME-RELATED ORGANELLES COMPLEX 1 SUBUNIT CNL1"/>
    <property type="match status" value="1"/>
</dbReference>
<dbReference type="PANTHER" id="PTHR39145:SF1">
    <property type="entry name" value="BIOGENESIS OF LYSOSOME-RELATED ORGANELLES COMPLEX 1 SUBUNIT CNL1"/>
    <property type="match status" value="1"/>
</dbReference>
<sequence length="100" mass="11607">MALQDESLGIDQLSVDYDYLVYRISDRVKSLELEATRLVQRQNELVGQVSERVIDENIERFRGVLRGLDELEEYFAMMEQIGMITDSFKERLDSAMAALK</sequence>
<gene>
    <name type="primary">CLN1</name>
    <name type="ordered locus">CAGL0A02618g</name>
</gene>
<feature type="chain" id="PRO_0000410642" description="Biogenesis of lysosome-related organelles complex 1 subunit CNL1">
    <location>
        <begin position="1"/>
        <end position="100"/>
    </location>
</feature>
<feature type="coiled-coil region" evidence="2">
    <location>
        <begin position="25"/>
        <end position="46"/>
    </location>
</feature>